<name>PBP2_ANTPE</name>
<organism>
    <name type="scientific">Antheraea pernyi</name>
    <name type="common">Chinese oak silk moth</name>
    <name type="synonym">Bombyx pernyi</name>
    <dbReference type="NCBI Taxonomy" id="7119"/>
    <lineage>
        <taxon>Eukaryota</taxon>
        <taxon>Metazoa</taxon>
        <taxon>Ecdysozoa</taxon>
        <taxon>Arthropoda</taxon>
        <taxon>Hexapoda</taxon>
        <taxon>Insecta</taxon>
        <taxon>Pterygota</taxon>
        <taxon>Neoptera</taxon>
        <taxon>Endopterygota</taxon>
        <taxon>Lepidoptera</taxon>
        <taxon>Glossata</taxon>
        <taxon>Ditrysia</taxon>
        <taxon>Bombycoidea</taxon>
        <taxon>Saturniidae</taxon>
        <taxon>Saturniinae</taxon>
        <taxon>Saturniini</taxon>
        <taxon>Antheraea</taxon>
    </lineage>
</organism>
<sequence>MIRKVLLSVLLAVLMTINLGQASPEVMKNLCMNYGKAMDQCKQELNLPDSVIADLYNFWKDDYVMTDRLAGCAINCLSTKLDIVDPDGNLHHGNAKEFAMKHGADDGMAHELVDIIHGCEKSSPPNDDKCIKTMDIAMCFKKEIHKLNWVPNMDLVVGEVLAEV</sequence>
<keyword id="KW-1015">Disulfide bond</keyword>
<keyword id="KW-0589">Pheromone response</keyword>
<keyword id="KW-0590">Pheromone-binding</keyword>
<keyword id="KW-0732">Signal</keyword>
<keyword id="KW-0813">Transport</keyword>
<reference key="1">
    <citation type="journal article" date="1991" name="Biochim. Biophys. Acta">
        <title>Cloning of genomic and complementary DNA encoding insect pheromone binding proteins: evidence for microdiversity.</title>
        <authorList>
            <person name="Krieger J."/>
            <person name="Raming K."/>
            <person name="Breer H."/>
        </authorList>
    </citation>
    <scope>NUCLEOTIDE SEQUENCE [MRNA]</scope>
    <source>
        <tissue>Antenna</tissue>
    </source>
</reference>
<feature type="signal peptide" evidence="2">
    <location>
        <begin position="1"/>
        <end position="22"/>
    </location>
</feature>
<feature type="chain" id="PRO_0000012557" description="Pheromone-binding protein 2">
    <location>
        <begin position="23"/>
        <end position="164"/>
    </location>
</feature>
<feature type="disulfide bond" evidence="1">
    <location>
        <begin position="41"/>
        <end position="76"/>
    </location>
</feature>
<feature type="disulfide bond" evidence="1">
    <location>
        <begin position="72"/>
        <end position="130"/>
    </location>
</feature>
<feature type="disulfide bond" evidence="1">
    <location>
        <begin position="119"/>
        <end position="139"/>
    </location>
</feature>
<proteinExistence type="evidence at transcript level"/>
<evidence type="ECO:0000250" key="1"/>
<evidence type="ECO:0000255" key="2"/>
<evidence type="ECO:0000305" key="3"/>
<dbReference type="EMBL" id="X96860">
    <property type="protein sequence ID" value="CAA65603.1"/>
    <property type="molecule type" value="mRNA"/>
</dbReference>
<dbReference type="PIR" id="S14448">
    <property type="entry name" value="S14448"/>
</dbReference>
<dbReference type="SMR" id="Q17078"/>
<dbReference type="GO" id="GO:0005550">
    <property type="term" value="F:pheromone binding"/>
    <property type="evidence" value="ECO:0007669"/>
    <property type="project" value="UniProtKB-KW"/>
</dbReference>
<dbReference type="GO" id="GO:0019236">
    <property type="term" value="P:response to pheromone"/>
    <property type="evidence" value="ECO:0007669"/>
    <property type="project" value="UniProtKB-KW"/>
</dbReference>
<dbReference type="CDD" id="cd23992">
    <property type="entry name" value="PBP_GOBP"/>
    <property type="match status" value="1"/>
</dbReference>
<dbReference type="Gene3D" id="1.10.238.20">
    <property type="entry name" value="Pheromone/general odorant binding protein domain"/>
    <property type="match status" value="1"/>
</dbReference>
<dbReference type="InterPro" id="IPR006072">
    <property type="entry name" value="Odorant/phero-bd_Lep"/>
</dbReference>
<dbReference type="InterPro" id="IPR006170">
    <property type="entry name" value="PBP/GOBP"/>
</dbReference>
<dbReference type="InterPro" id="IPR036728">
    <property type="entry name" value="PBP_GOBP_sf"/>
</dbReference>
<dbReference type="Pfam" id="PF01395">
    <property type="entry name" value="PBP_GOBP"/>
    <property type="match status" value="1"/>
</dbReference>
<dbReference type="PIRSF" id="PIRSF015604">
    <property type="entry name" value="Odorant/phero_bd"/>
    <property type="match status" value="1"/>
</dbReference>
<dbReference type="PRINTS" id="PR00484">
    <property type="entry name" value="PBPGOBP"/>
</dbReference>
<dbReference type="SMART" id="SM00708">
    <property type="entry name" value="PhBP"/>
    <property type="match status" value="1"/>
</dbReference>
<dbReference type="SUPFAM" id="SSF47565">
    <property type="entry name" value="Insect pheromone/odorant-binding proteins"/>
    <property type="match status" value="1"/>
</dbReference>
<comment type="function">
    <text>This major soluble protein in olfactory sensilla of male moths might serve to solubilize the extremely hydrophobic pheromone molecules and to transport pheromone through the aqueous lymph to receptors located on olfactory cilia.</text>
</comment>
<comment type="tissue specificity">
    <text>Antenna.</text>
</comment>
<comment type="similarity">
    <text evidence="3">Belongs to the PBP/GOBP family.</text>
</comment>
<protein>
    <recommendedName>
        <fullName>Pheromone-binding protein 2</fullName>
        <shortName>PBP 2</shortName>
    </recommendedName>
    <alternativeName>
        <fullName>APR-2</fullName>
    </alternativeName>
</protein>
<accession>Q17078</accession>